<organism>
    <name type="scientific">Yersinia pseudotuberculosis serotype IB (strain PB1/+)</name>
    <dbReference type="NCBI Taxonomy" id="502801"/>
    <lineage>
        <taxon>Bacteria</taxon>
        <taxon>Pseudomonadati</taxon>
        <taxon>Pseudomonadota</taxon>
        <taxon>Gammaproteobacteria</taxon>
        <taxon>Enterobacterales</taxon>
        <taxon>Yersiniaceae</taxon>
        <taxon>Yersinia</taxon>
    </lineage>
</organism>
<reference key="1">
    <citation type="submission" date="2008-04" db="EMBL/GenBank/DDBJ databases">
        <title>Complete sequence of Yersinia pseudotuberculosis PB1/+.</title>
        <authorList>
            <person name="Copeland A."/>
            <person name="Lucas S."/>
            <person name="Lapidus A."/>
            <person name="Glavina del Rio T."/>
            <person name="Dalin E."/>
            <person name="Tice H."/>
            <person name="Bruce D."/>
            <person name="Goodwin L."/>
            <person name="Pitluck S."/>
            <person name="Munk A.C."/>
            <person name="Brettin T."/>
            <person name="Detter J.C."/>
            <person name="Han C."/>
            <person name="Tapia R."/>
            <person name="Schmutz J."/>
            <person name="Larimer F."/>
            <person name="Land M."/>
            <person name="Hauser L."/>
            <person name="Challacombe J.F."/>
            <person name="Green L."/>
            <person name="Lindler L.E."/>
            <person name="Nikolich M.P."/>
            <person name="Richardson P."/>
        </authorList>
    </citation>
    <scope>NUCLEOTIDE SEQUENCE [LARGE SCALE GENOMIC DNA]</scope>
    <source>
        <strain>PB1/+</strain>
    </source>
</reference>
<evidence type="ECO:0000255" key="1">
    <source>
        <dbReference type="HAMAP-Rule" id="MF_01300"/>
    </source>
</evidence>
<gene>
    <name evidence="1" type="primary">dctA</name>
    <name type="ordered locus">YPTS_4048</name>
</gene>
<comment type="function">
    <text evidence="1">Responsible for the transport of dicarboxylates such as succinate, fumarate, and malate from the periplasm across the membrane.</text>
</comment>
<comment type="subcellular location">
    <subcellularLocation>
        <location evidence="1">Cell inner membrane</location>
        <topology evidence="1">Multi-pass membrane protein</topology>
    </subcellularLocation>
</comment>
<comment type="similarity">
    <text evidence="1">Belongs to the dicarboxylate/amino acid:cation symporter (DAACS) (TC 2.A.23) family.</text>
</comment>
<protein>
    <recommendedName>
        <fullName evidence="1">C4-dicarboxylate transport protein</fullName>
    </recommendedName>
</protein>
<name>DCTA_YERPB</name>
<keyword id="KW-0997">Cell inner membrane</keyword>
<keyword id="KW-1003">Cell membrane</keyword>
<keyword id="KW-0472">Membrane</keyword>
<keyword id="KW-0769">Symport</keyword>
<keyword id="KW-0812">Transmembrane</keyword>
<keyword id="KW-1133">Transmembrane helix</keyword>
<keyword id="KW-0813">Transport</keyword>
<dbReference type="EMBL" id="CP001048">
    <property type="protein sequence ID" value="ACC90997.1"/>
    <property type="molecule type" value="Genomic_DNA"/>
</dbReference>
<dbReference type="RefSeq" id="WP_002209553.1">
    <property type="nucleotide sequence ID" value="NZ_CP009780.1"/>
</dbReference>
<dbReference type="SMR" id="B2K6M5"/>
<dbReference type="KEGG" id="ypb:YPTS_4048"/>
<dbReference type="PATRIC" id="fig|502801.10.peg.3517"/>
<dbReference type="GO" id="GO:0005886">
    <property type="term" value="C:plasma membrane"/>
    <property type="evidence" value="ECO:0007669"/>
    <property type="project" value="UniProtKB-SubCell"/>
</dbReference>
<dbReference type="GO" id="GO:0015138">
    <property type="term" value="F:fumarate transmembrane transporter activity"/>
    <property type="evidence" value="ECO:0007669"/>
    <property type="project" value="TreeGrafter"/>
</dbReference>
<dbReference type="GO" id="GO:0015366">
    <property type="term" value="F:malate:proton symporter activity"/>
    <property type="evidence" value="ECO:0007669"/>
    <property type="project" value="TreeGrafter"/>
</dbReference>
<dbReference type="GO" id="GO:0015141">
    <property type="term" value="F:succinate transmembrane transporter activity"/>
    <property type="evidence" value="ECO:0007669"/>
    <property type="project" value="TreeGrafter"/>
</dbReference>
<dbReference type="GO" id="GO:0070778">
    <property type="term" value="P:L-aspartate transmembrane transport"/>
    <property type="evidence" value="ECO:0007669"/>
    <property type="project" value="TreeGrafter"/>
</dbReference>
<dbReference type="FunFam" id="1.10.3860.10:FF:000001">
    <property type="entry name" value="C4-dicarboxylate transport protein"/>
    <property type="match status" value="1"/>
</dbReference>
<dbReference type="Gene3D" id="1.10.3860.10">
    <property type="entry name" value="Sodium:dicarboxylate symporter"/>
    <property type="match status" value="1"/>
</dbReference>
<dbReference type="HAMAP" id="MF_01300">
    <property type="entry name" value="C4_dicarb_transport"/>
    <property type="match status" value="1"/>
</dbReference>
<dbReference type="InterPro" id="IPR023954">
    <property type="entry name" value="C4_dicarb_transport"/>
</dbReference>
<dbReference type="InterPro" id="IPR001991">
    <property type="entry name" value="Na-dicarboxylate_symporter"/>
</dbReference>
<dbReference type="InterPro" id="IPR018107">
    <property type="entry name" value="Na-dicarboxylate_symporter_CS"/>
</dbReference>
<dbReference type="InterPro" id="IPR036458">
    <property type="entry name" value="Na:dicarbo_symporter_sf"/>
</dbReference>
<dbReference type="NCBIfam" id="NF002461">
    <property type="entry name" value="PRK01663.1"/>
    <property type="match status" value="1"/>
</dbReference>
<dbReference type="NCBIfam" id="NF009587">
    <property type="entry name" value="PRK13027.1"/>
    <property type="match status" value="1"/>
</dbReference>
<dbReference type="PANTHER" id="PTHR42865:SF1">
    <property type="entry name" value="AEROBIC C4-DICARBOXYLATE TRANSPORT PROTEIN"/>
    <property type="match status" value="1"/>
</dbReference>
<dbReference type="PANTHER" id="PTHR42865">
    <property type="entry name" value="PROTON/GLUTAMATE-ASPARTATE SYMPORTER"/>
    <property type="match status" value="1"/>
</dbReference>
<dbReference type="Pfam" id="PF00375">
    <property type="entry name" value="SDF"/>
    <property type="match status" value="1"/>
</dbReference>
<dbReference type="PRINTS" id="PR00173">
    <property type="entry name" value="EDTRNSPORT"/>
</dbReference>
<dbReference type="SUPFAM" id="SSF118215">
    <property type="entry name" value="Proton glutamate symport protein"/>
    <property type="match status" value="1"/>
</dbReference>
<dbReference type="PROSITE" id="PS00713">
    <property type="entry name" value="NA_DICARBOXYL_SYMP_1"/>
    <property type="match status" value="1"/>
</dbReference>
<dbReference type="PROSITE" id="PS00714">
    <property type="entry name" value="NA_DICARBOXYL_SYMP_2"/>
    <property type="match status" value="1"/>
</dbReference>
<feature type="chain" id="PRO_1000140477" description="C4-dicarboxylate transport protein">
    <location>
        <begin position="1"/>
        <end position="429"/>
    </location>
</feature>
<feature type="transmembrane region" description="Helical" evidence="1">
    <location>
        <begin position="3"/>
        <end position="23"/>
    </location>
</feature>
<feature type="transmembrane region" description="Helical" evidence="1">
    <location>
        <begin position="44"/>
        <end position="64"/>
    </location>
</feature>
<feature type="transmembrane region" description="Helical" evidence="1">
    <location>
        <begin position="76"/>
        <end position="96"/>
    </location>
</feature>
<feature type="transmembrane region" description="Helical" evidence="1">
    <location>
        <begin position="144"/>
        <end position="164"/>
    </location>
</feature>
<feature type="transmembrane region" description="Helical" evidence="1">
    <location>
        <begin position="184"/>
        <end position="204"/>
    </location>
</feature>
<feature type="transmembrane region" description="Helical" evidence="1">
    <location>
        <begin position="222"/>
        <end position="242"/>
    </location>
</feature>
<feature type="transmembrane region" description="Helical" evidence="1">
    <location>
        <begin position="331"/>
        <end position="351"/>
    </location>
</feature>
<feature type="transmembrane region" description="Helical" evidence="1">
    <location>
        <begin position="352"/>
        <end position="372"/>
    </location>
</feature>
<proteinExistence type="inferred from homology"/>
<accession>B2K6M5</accession>
<sequence length="429" mass="45498">MKVSIFKTLYFQVLTAITIGVLLGHFYPEIGAQMKPLGDGFVKLIKMIIAPVIFCTVVTGIAGMESMKAVGRTGAIALLYFEIVSTLALLIGLVVVNVAQPGVGMNIDPATLDAKAVALYAEQASQQGIIPFLLDIIPGSVVGAFASGNILQVLLFAVLFGFALHRLGEKGQLIFNVIESFSRVIFGVINMIMRLAPLGAFGAMAFTIGKYGVGSLVQLGQLILCFYLTCILFVVLVLGTIAKFNGFNIFKFIRYIKEELLIVLGTSSSESVLPRMLDKMENAGCKKSVVGLVIPTGYSFNLDGTSIYLTMAAVFIAQATNTHMDIMHQVTLLVVLLLSSKGAAGVTGSGFIVLAATISAVGHLPLAGLALILGIDRFMSEARALTNLVGNGVATIVVAKWCKQLDNDQLQAVLSNKVLPNVKSSVSVS</sequence>